<organismHost>
    <name type="scientific">Homo sapiens</name>
    <name type="common">Human</name>
    <dbReference type="NCBI Taxonomy" id="9606"/>
</organismHost>
<proteinExistence type="inferred from homology"/>
<keyword id="KW-0014">AIDS</keyword>
<keyword id="KW-0053">Apoptosis</keyword>
<keyword id="KW-1043">Host membrane</keyword>
<keyword id="KW-0945">Host-virus interaction</keyword>
<keyword id="KW-1090">Inhibition of host innate immune response by virus</keyword>
<keyword id="KW-1084">Inhibition of host tetherin by virus</keyword>
<keyword id="KW-0407">Ion channel</keyword>
<keyword id="KW-0406">Ion transport</keyword>
<keyword id="KW-0472">Membrane</keyword>
<keyword id="KW-0597">Phosphoprotein</keyword>
<keyword id="KW-0812">Transmembrane</keyword>
<keyword id="KW-1133">Transmembrane helix</keyword>
<keyword id="KW-0813">Transport</keyword>
<keyword id="KW-0899">Viral immunoevasion</keyword>
<accession>P08803</accession>
<protein>
    <recommendedName>
        <fullName evidence="1">Protein Vpu</fullName>
    </recommendedName>
    <alternativeName>
        <fullName evidence="1">U ORF protein</fullName>
    </alternativeName>
    <alternativeName>
        <fullName evidence="1">Viral protein U</fullName>
    </alternativeName>
</protein>
<organism>
    <name type="scientific">Human immunodeficiency virus type 1 group M subtype B (isolate CDC-451)</name>
    <name type="common">HIV-1</name>
    <dbReference type="NCBI Taxonomy" id="11687"/>
    <lineage>
        <taxon>Viruses</taxon>
        <taxon>Riboviria</taxon>
        <taxon>Pararnavirae</taxon>
        <taxon>Artverviricota</taxon>
        <taxon>Revtraviricetes</taxon>
        <taxon>Ortervirales</taxon>
        <taxon>Retroviridae</taxon>
        <taxon>Orthoretrovirinae</taxon>
        <taxon>Lentivirus</taxon>
        <taxon>Human immunodeficiency virus type 1</taxon>
    </lineage>
</organism>
<feature type="chain" id="PRO_0000085418" description="Protein Vpu">
    <location>
        <begin position="1"/>
        <end position="81"/>
    </location>
</feature>
<feature type="topological domain" description="Extracellular" evidence="1">
    <location>
        <begin position="1"/>
        <end position="7"/>
    </location>
</feature>
<feature type="transmembrane region" description="Helical" evidence="1">
    <location>
        <begin position="8"/>
        <end position="28"/>
    </location>
</feature>
<feature type="topological domain" description="Cytoplasmic" evidence="1">
    <location>
        <begin position="29"/>
        <end position="81"/>
    </location>
</feature>
<feature type="region of interest" description="Disordered" evidence="2">
    <location>
        <begin position="50"/>
        <end position="81"/>
    </location>
</feature>
<feature type="compositionally biased region" description="Acidic residues" evidence="2">
    <location>
        <begin position="53"/>
        <end position="63"/>
    </location>
</feature>
<feature type="modified residue" description="Phosphoserine; by host CK2" evidence="1">
    <location>
        <position position="57"/>
    </location>
</feature>
<reference key="1">
    <citation type="journal article" date="1986" name="Proc. Natl. Acad. Sci. U.S.A.">
        <title>Molecular cloning and primary nucleotide sequence analysis of a distinct human immunodeficiency virus isolate reveal significant divergence in its genomic sequences.</title>
        <authorList>
            <person name="Desai S.M."/>
            <person name="Kalyanaraman V.S."/>
            <person name="Casey J.M."/>
            <person name="Srinivasan A."/>
            <person name="Andersen P.R."/>
            <person name="Devare S.G."/>
        </authorList>
    </citation>
    <scope>NUCLEOTIDE SEQUENCE [GENOMIC RNA]</scope>
</reference>
<comment type="function">
    <text evidence="1">Enhances virion budding by targeting host CD4 and Tetherin/BST2 to proteasome degradation. Degradation of CD4 prevents any unwanted premature interactions between viral Env and its host receptor CD4 in the endoplasmic reticulum. Degradation of antiretroviral protein Tetherin/BST2 is important for virion budding, as BST2 tethers new viral particles to the host cell membrane. Mechanistically, Vpu bridges either CD4 or BST2 to BTRC, a substrate recognition subunit of the Skp1/Cullin/F-box protein E3 ubiquitin ligase, induces their ubiquitination and subsequent proteasomal degradation. The alteration of the E3 ligase specificity by Vpu seems to promote the degradation of host IKBKB, leading to NF-kappa-B down-regulation and subsequent apoptosis. Acts as a viroporin that forms an oligomeric ion channel in membranes. Modulates the host DNA repair mechanisms to promote degradation of nuclear viral cDNA in cells that are already productively infected in order to suppress immune sensing and proviral hyper-integration (superinfection). Manipulates PML-NBs and modulates SUMOylation of host BLM protein thereby enhancing its DNA-end processing activity toward viral unintegrated linear DNA. Also inhibits RAD52-mediated homologous repair of viral cDNA, preventing the generation of dead-end circular forms of single copies of the long terminal repeat and permitting sustained nucleolytic attack.</text>
</comment>
<comment type="activity regulation">
    <text evidence="1">Ion channel activity is inhibited by hexamethylene amiloride in vitro.</text>
</comment>
<comment type="subunit">
    <text evidence="1">Homopentamer. Interacts with host CD4 and BRTC; these interactions induce proteasomal degradation of CD4. Interacts with host BST2; this interaction leads to the degradation of host BST2. Interacts with host FBXW11. Interacts with host AP1M1; this interaction plays a role in the mistrafficking and subsequent degradation of host BST2. Interacts with host RANBP2; this interaction allows Vpu to down-regulate host BLM sumoylation.</text>
</comment>
<comment type="subcellular location">
    <subcellularLocation>
        <location evidence="1">Host membrane</location>
        <topology evidence="1">Single-pass type I membrane protein</topology>
    </subcellularLocation>
</comment>
<comment type="domain">
    <text evidence="1">The N-terminus and transmembrane domains are required for self-oligomerization and proper virion budding, whereas the cytoplasmic domain is required for CD4 degradation. The cytoplasmic domain is composed of 2 amphipathic alpha helix that form a U-shape.</text>
</comment>
<comment type="PTM">
    <text evidence="1">Phosphorylated by host CK2. This phosphorylation is necessary for interaction with human BTRC and degradation of CD4.</text>
</comment>
<comment type="miscellaneous">
    <text evidence="1">HIV-1 lineages are divided in three main groups, M (for Major), O (for Outlier), and N (for New, or Non-M, Non-O). The vast majority of strains found worldwide belong to the group M. Group O seems to be endemic to and largely confined to Cameroon and neighboring countries in West Central Africa, where these viruses represent a small minority of HIV-1 strains. The group N is represented by a limited number of isolates from Cameroonian persons. The group M is further subdivided in 9 clades or subtypes (A to D, F to H, J and K).</text>
</comment>
<comment type="similarity">
    <text evidence="1">Belongs to the HIV-1 VPU protein family.</text>
</comment>
<sequence>MQSLEIVAIVELVVAAIIAIVVWTIVFIEYRKILRQRKIDRLIDRIREREEDNGNESEGDQEELSALVEMGHHAPWNVDDL</sequence>
<dbReference type="EMBL" id="M13137">
    <property type="status" value="NOT_ANNOTATED_CDS"/>
    <property type="molecule type" value="Genomic_RNA"/>
</dbReference>
<dbReference type="GO" id="GO:0033644">
    <property type="term" value="C:host cell membrane"/>
    <property type="evidence" value="ECO:0007669"/>
    <property type="project" value="UniProtKB-SubCell"/>
</dbReference>
<dbReference type="GO" id="GO:0016020">
    <property type="term" value="C:membrane"/>
    <property type="evidence" value="ECO:0007669"/>
    <property type="project" value="UniProtKB-UniRule"/>
</dbReference>
<dbReference type="GO" id="GO:0042609">
    <property type="term" value="F:CD4 receptor binding"/>
    <property type="evidence" value="ECO:0007669"/>
    <property type="project" value="UniProtKB-UniRule"/>
</dbReference>
<dbReference type="GO" id="GO:0005261">
    <property type="term" value="F:monoatomic cation channel activity"/>
    <property type="evidence" value="ECO:0007669"/>
    <property type="project" value="UniProtKB-UniRule"/>
</dbReference>
<dbReference type="GO" id="GO:0032801">
    <property type="term" value="P:receptor catabolic process"/>
    <property type="evidence" value="ECO:0007669"/>
    <property type="project" value="UniProtKB-UniRule"/>
</dbReference>
<dbReference type="GO" id="GO:0052170">
    <property type="term" value="P:symbiont-mediated suppression of host innate immune response"/>
    <property type="evidence" value="ECO:0007669"/>
    <property type="project" value="UniProtKB-KW"/>
</dbReference>
<dbReference type="GO" id="GO:0039502">
    <property type="term" value="P:symbiont-mediated suppression of host type I interferon-mediated signaling pathway"/>
    <property type="evidence" value="ECO:0007669"/>
    <property type="project" value="UniProtKB-UniRule"/>
</dbReference>
<dbReference type="GO" id="GO:0039587">
    <property type="term" value="P:symbiont-mediated-mediated suppression of host tetherin activity"/>
    <property type="evidence" value="ECO:0007669"/>
    <property type="project" value="UniProtKB-UniRule"/>
</dbReference>
<dbReference type="GO" id="GO:0019076">
    <property type="term" value="P:viral release from host cell"/>
    <property type="evidence" value="ECO:0007669"/>
    <property type="project" value="UniProtKB-UniRule"/>
</dbReference>
<dbReference type="Gene3D" id="1.10.195.10">
    <property type="entry name" value="HIV-1 VPU cytoplasmic domain"/>
    <property type="match status" value="1"/>
</dbReference>
<dbReference type="HAMAP" id="MF_04082">
    <property type="entry name" value="HIV_VPU"/>
    <property type="match status" value="1"/>
</dbReference>
<dbReference type="InterPro" id="IPR008187">
    <property type="entry name" value="Vpu"/>
</dbReference>
<dbReference type="InterPro" id="IPR009032">
    <property type="entry name" value="Vpu_cyt_dom_sf"/>
</dbReference>
<dbReference type="Pfam" id="PF00558">
    <property type="entry name" value="Vpu"/>
    <property type="match status" value="1"/>
</dbReference>
<dbReference type="SUPFAM" id="SSF57647">
    <property type="entry name" value="HIV-1 VPU cytoplasmic domain"/>
    <property type="match status" value="1"/>
</dbReference>
<name>VPU_HV1C4</name>
<evidence type="ECO:0000255" key="1">
    <source>
        <dbReference type="HAMAP-Rule" id="MF_04082"/>
    </source>
</evidence>
<evidence type="ECO:0000256" key="2">
    <source>
        <dbReference type="SAM" id="MobiDB-lite"/>
    </source>
</evidence>
<gene>
    <name evidence="1" type="primary">vpu</name>
</gene>